<accession>Q5PNG2</accession>
<protein>
    <recommendedName>
        <fullName evidence="1">HTH-type transcriptional regulator IscR</fullName>
    </recommendedName>
</protein>
<comment type="function">
    <text evidence="1">Regulates the transcription of several operons and genes involved in the biogenesis of Fe-S clusters and Fe-S-containing proteins.</text>
</comment>
<comment type="cofactor">
    <cofactor evidence="1">
        <name>[2Fe-2S] cluster</name>
        <dbReference type="ChEBI" id="CHEBI:190135"/>
    </cofactor>
    <text evidence="1">Binds 1 [2Fe-2S] cluster.</text>
</comment>
<dbReference type="EMBL" id="CP000026">
    <property type="protein sequence ID" value="AAV76341.1"/>
    <property type="molecule type" value="Genomic_DNA"/>
</dbReference>
<dbReference type="RefSeq" id="WP_001241346.1">
    <property type="nucleotide sequence ID" value="NC_006511.1"/>
</dbReference>
<dbReference type="SMR" id="Q5PNG2"/>
<dbReference type="KEGG" id="spt:SPA0322"/>
<dbReference type="HOGENOM" id="CLU_107144_0_0_6"/>
<dbReference type="Proteomes" id="UP000008185">
    <property type="component" value="Chromosome"/>
</dbReference>
<dbReference type="GO" id="GO:0005829">
    <property type="term" value="C:cytosol"/>
    <property type="evidence" value="ECO:0007669"/>
    <property type="project" value="TreeGrafter"/>
</dbReference>
<dbReference type="GO" id="GO:0051537">
    <property type="term" value="F:2 iron, 2 sulfur cluster binding"/>
    <property type="evidence" value="ECO:0007669"/>
    <property type="project" value="UniProtKB-KW"/>
</dbReference>
<dbReference type="GO" id="GO:0003700">
    <property type="term" value="F:DNA-binding transcription factor activity"/>
    <property type="evidence" value="ECO:0007669"/>
    <property type="project" value="UniProtKB-UniRule"/>
</dbReference>
<dbReference type="GO" id="GO:0003690">
    <property type="term" value="F:double-stranded DNA binding"/>
    <property type="evidence" value="ECO:0007669"/>
    <property type="project" value="UniProtKB-UniRule"/>
</dbReference>
<dbReference type="GO" id="GO:0005506">
    <property type="term" value="F:iron ion binding"/>
    <property type="evidence" value="ECO:0007669"/>
    <property type="project" value="UniProtKB-UniRule"/>
</dbReference>
<dbReference type="FunFam" id="1.10.10.10:FF:000026">
    <property type="entry name" value="HTH-type transcriptional regulator IscR"/>
    <property type="match status" value="1"/>
</dbReference>
<dbReference type="Gene3D" id="1.10.10.10">
    <property type="entry name" value="Winged helix-like DNA-binding domain superfamily/Winged helix DNA-binding domain"/>
    <property type="match status" value="1"/>
</dbReference>
<dbReference type="HAMAP" id="MF_01176">
    <property type="entry name" value="HTH_type_IscR"/>
    <property type="match status" value="1"/>
</dbReference>
<dbReference type="InterPro" id="IPR010242">
    <property type="entry name" value="TF_HTH_IscR"/>
</dbReference>
<dbReference type="InterPro" id="IPR030489">
    <property type="entry name" value="TR_Rrf2-type_CS"/>
</dbReference>
<dbReference type="InterPro" id="IPR000944">
    <property type="entry name" value="Tscrpt_reg_Rrf2"/>
</dbReference>
<dbReference type="InterPro" id="IPR036388">
    <property type="entry name" value="WH-like_DNA-bd_sf"/>
</dbReference>
<dbReference type="InterPro" id="IPR036390">
    <property type="entry name" value="WH_DNA-bd_sf"/>
</dbReference>
<dbReference type="NCBIfam" id="TIGR02010">
    <property type="entry name" value="IscR"/>
    <property type="match status" value="1"/>
</dbReference>
<dbReference type="NCBIfam" id="NF008110">
    <property type="entry name" value="PRK10857.1"/>
    <property type="match status" value="1"/>
</dbReference>
<dbReference type="NCBIfam" id="TIGR00738">
    <property type="entry name" value="rrf2_super"/>
    <property type="match status" value="1"/>
</dbReference>
<dbReference type="PANTHER" id="PTHR33221:SF5">
    <property type="entry name" value="HTH-TYPE TRANSCRIPTIONAL REGULATOR ISCR"/>
    <property type="match status" value="1"/>
</dbReference>
<dbReference type="PANTHER" id="PTHR33221">
    <property type="entry name" value="WINGED HELIX-TURN-HELIX TRANSCRIPTIONAL REGULATOR, RRF2 FAMILY"/>
    <property type="match status" value="1"/>
</dbReference>
<dbReference type="Pfam" id="PF02082">
    <property type="entry name" value="Rrf2"/>
    <property type="match status" value="1"/>
</dbReference>
<dbReference type="SUPFAM" id="SSF46785">
    <property type="entry name" value="Winged helix' DNA-binding domain"/>
    <property type="match status" value="1"/>
</dbReference>
<dbReference type="PROSITE" id="PS01332">
    <property type="entry name" value="HTH_RRF2_1"/>
    <property type="match status" value="1"/>
</dbReference>
<dbReference type="PROSITE" id="PS51197">
    <property type="entry name" value="HTH_RRF2_2"/>
    <property type="match status" value="1"/>
</dbReference>
<proteinExistence type="inferred from homology"/>
<gene>
    <name evidence="1" type="primary">iscR</name>
    <name type="ordered locus">SPA0322</name>
</gene>
<name>ISCR_SALPA</name>
<feature type="chain" id="PRO_0000268923" description="HTH-type transcriptional regulator IscR">
    <location>
        <begin position="1"/>
        <end position="164"/>
    </location>
</feature>
<feature type="domain" description="HTH rrf2-type" evidence="1">
    <location>
        <begin position="2"/>
        <end position="131"/>
    </location>
</feature>
<feature type="DNA-binding region" description="H-T-H motif" evidence="1">
    <location>
        <begin position="28"/>
        <end position="51"/>
    </location>
</feature>
<feature type="binding site" evidence="1">
    <location>
        <position position="92"/>
    </location>
    <ligand>
        <name>[2Fe-2S] cluster</name>
        <dbReference type="ChEBI" id="CHEBI:190135"/>
    </ligand>
</feature>
<feature type="binding site" evidence="1">
    <location>
        <position position="98"/>
    </location>
    <ligand>
        <name>[2Fe-2S] cluster</name>
        <dbReference type="ChEBI" id="CHEBI:190135"/>
    </ligand>
</feature>
<feature type="binding site" evidence="1">
    <location>
        <position position="104"/>
    </location>
    <ligand>
        <name>[2Fe-2S] cluster</name>
        <dbReference type="ChEBI" id="CHEBI:190135"/>
    </ligand>
</feature>
<reference key="1">
    <citation type="journal article" date="2004" name="Nat. Genet.">
        <title>Comparison of genome degradation in Paratyphi A and Typhi, human-restricted serovars of Salmonella enterica that cause typhoid.</title>
        <authorList>
            <person name="McClelland M."/>
            <person name="Sanderson K.E."/>
            <person name="Clifton S.W."/>
            <person name="Latreille P."/>
            <person name="Porwollik S."/>
            <person name="Sabo A."/>
            <person name="Meyer R."/>
            <person name="Bieri T."/>
            <person name="Ozersky P."/>
            <person name="McLellan M."/>
            <person name="Harkins C.R."/>
            <person name="Wang C."/>
            <person name="Nguyen C."/>
            <person name="Berghoff A."/>
            <person name="Elliott G."/>
            <person name="Kohlberg S."/>
            <person name="Strong C."/>
            <person name="Du F."/>
            <person name="Carter J."/>
            <person name="Kremizki C."/>
            <person name="Layman D."/>
            <person name="Leonard S."/>
            <person name="Sun H."/>
            <person name="Fulton L."/>
            <person name="Nash W."/>
            <person name="Miner T."/>
            <person name="Minx P."/>
            <person name="Delehaunty K."/>
            <person name="Fronick C."/>
            <person name="Magrini V."/>
            <person name="Nhan M."/>
            <person name="Warren W."/>
            <person name="Florea L."/>
            <person name="Spieth J."/>
            <person name="Wilson R.K."/>
        </authorList>
    </citation>
    <scope>NUCLEOTIDE SEQUENCE [LARGE SCALE GENOMIC DNA]</scope>
    <source>
        <strain>ATCC 9150 / SARB42</strain>
    </source>
</reference>
<sequence length="164" mass="17391">MRLTSKGRYAVTAMLDVALNSEAGPVPLADISERQGISLSYLEQLFSRLRKNGLVSSVRGPGGGYLLGKDAGSIAVGEVISAVDESVDATRCQGKGGCQGGDKCLTHALWRDLSDRLTGFLNNITLGELVNNQEVLDVSGRQHTHDAPRASGRAQDAIDVKLRA</sequence>
<keyword id="KW-0001">2Fe-2S</keyword>
<keyword id="KW-0010">Activator</keyword>
<keyword id="KW-0238">DNA-binding</keyword>
<keyword id="KW-0408">Iron</keyword>
<keyword id="KW-0411">Iron-sulfur</keyword>
<keyword id="KW-0479">Metal-binding</keyword>
<keyword id="KW-0678">Repressor</keyword>
<keyword id="KW-0804">Transcription</keyword>
<keyword id="KW-0805">Transcription regulation</keyword>
<organism>
    <name type="scientific">Salmonella paratyphi A (strain ATCC 9150 / SARB42)</name>
    <dbReference type="NCBI Taxonomy" id="295319"/>
    <lineage>
        <taxon>Bacteria</taxon>
        <taxon>Pseudomonadati</taxon>
        <taxon>Pseudomonadota</taxon>
        <taxon>Gammaproteobacteria</taxon>
        <taxon>Enterobacterales</taxon>
        <taxon>Enterobacteriaceae</taxon>
        <taxon>Salmonella</taxon>
    </lineage>
</organism>
<evidence type="ECO:0000255" key="1">
    <source>
        <dbReference type="HAMAP-Rule" id="MF_01176"/>
    </source>
</evidence>